<dbReference type="EMBL" id="CP001020">
    <property type="protein sequence ID" value="ACJ19768.1"/>
    <property type="molecule type" value="Genomic_DNA"/>
</dbReference>
<dbReference type="RefSeq" id="WP_005771445.1">
    <property type="nucleotide sequence ID" value="NC_011528.1"/>
</dbReference>
<dbReference type="SMR" id="B6J5S6"/>
<dbReference type="KEGG" id="cbc:CbuK_0487"/>
<dbReference type="HOGENOM" id="CLU_064548_3_1_6"/>
<dbReference type="GO" id="GO:0022625">
    <property type="term" value="C:cytosolic large ribosomal subunit"/>
    <property type="evidence" value="ECO:0007669"/>
    <property type="project" value="TreeGrafter"/>
</dbReference>
<dbReference type="GO" id="GO:0003735">
    <property type="term" value="F:structural constituent of ribosome"/>
    <property type="evidence" value="ECO:0007669"/>
    <property type="project" value="InterPro"/>
</dbReference>
<dbReference type="GO" id="GO:0006412">
    <property type="term" value="P:translation"/>
    <property type="evidence" value="ECO:0007669"/>
    <property type="project" value="UniProtKB-UniRule"/>
</dbReference>
<dbReference type="FunFam" id="2.30.170.40:FF:000001">
    <property type="entry name" value="50S ribosomal protein L28"/>
    <property type="match status" value="1"/>
</dbReference>
<dbReference type="Gene3D" id="2.30.170.40">
    <property type="entry name" value="Ribosomal protein L28/L24"/>
    <property type="match status" value="1"/>
</dbReference>
<dbReference type="HAMAP" id="MF_00373">
    <property type="entry name" value="Ribosomal_bL28"/>
    <property type="match status" value="1"/>
</dbReference>
<dbReference type="InterPro" id="IPR026569">
    <property type="entry name" value="Ribosomal_bL28"/>
</dbReference>
<dbReference type="InterPro" id="IPR034704">
    <property type="entry name" value="Ribosomal_bL28/bL31-like_sf"/>
</dbReference>
<dbReference type="InterPro" id="IPR001383">
    <property type="entry name" value="Ribosomal_bL28_bact-type"/>
</dbReference>
<dbReference type="InterPro" id="IPR037147">
    <property type="entry name" value="Ribosomal_bL28_sf"/>
</dbReference>
<dbReference type="NCBIfam" id="TIGR00009">
    <property type="entry name" value="L28"/>
    <property type="match status" value="1"/>
</dbReference>
<dbReference type="PANTHER" id="PTHR13528">
    <property type="entry name" value="39S RIBOSOMAL PROTEIN L28, MITOCHONDRIAL"/>
    <property type="match status" value="1"/>
</dbReference>
<dbReference type="PANTHER" id="PTHR13528:SF2">
    <property type="entry name" value="LARGE RIBOSOMAL SUBUNIT PROTEIN BL28M"/>
    <property type="match status" value="1"/>
</dbReference>
<dbReference type="Pfam" id="PF00830">
    <property type="entry name" value="Ribosomal_L28"/>
    <property type="match status" value="1"/>
</dbReference>
<dbReference type="SUPFAM" id="SSF143800">
    <property type="entry name" value="L28p-like"/>
    <property type="match status" value="1"/>
</dbReference>
<feature type="chain" id="PRO_1000121613" description="Large ribosomal subunit protein bL28">
    <location>
        <begin position="1"/>
        <end position="79"/>
    </location>
</feature>
<feature type="region of interest" description="Disordered" evidence="2">
    <location>
        <begin position="1"/>
        <end position="26"/>
    </location>
</feature>
<feature type="compositionally biased region" description="Polar residues" evidence="2">
    <location>
        <begin position="11"/>
        <end position="20"/>
    </location>
</feature>
<comment type="similarity">
    <text evidence="1">Belongs to the bacterial ribosomal protein bL28 family.</text>
</comment>
<reference key="1">
    <citation type="journal article" date="2009" name="Infect. Immun.">
        <title>Comparative genomics reveal extensive transposon-mediated genomic plasticity and diversity among potential effector proteins within the genus Coxiella.</title>
        <authorList>
            <person name="Beare P.A."/>
            <person name="Unsworth N."/>
            <person name="Andoh M."/>
            <person name="Voth D.E."/>
            <person name="Omsland A."/>
            <person name="Gilk S.D."/>
            <person name="Williams K.P."/>
            <person name="Sobral B.W."/>
            <person name="Kupko J.J. III"/>
            <person name="Porcella S.F."/>
            <person name="Samuel J.E."/>
            <person name="Heinzen R.A."/>
        </authorList>
    </citation>
    <scope>NUCLEOTIDE SEQUENCE [LARGE SCALE GENOMIC DNA]</scope>
    <source>
        <strain>CbuK_Q154</strain>
    </source>
</reference>
<name>RL28_COXB1</name>
<accession>B6J5S6</accession>
<protein>
    <recommendedName>
        <fullName evidence="1">Large ribosomal subunit protein bL28</fullName>
    </recommendedName>
    <alternativeName>
        <fullName evidence="3">50S ribosomal protein L28</fullName>
    </alternativeName>
</protein>
<gene>
    <name evidence="1" type="primary">rpmB</name>
    <name type="ordered locus">CbuK_0487</name>
</gene>
<evidence type="ECO:0000255" key="1">
    <source>
        <dbReference type="HAMAP-Rule" id="MF_00373"/>
    </source>
</evidence>
<evidence type="ECO:0000256" key="2">
    <source>
        <dbReference type="SAM" id="MobiDB-lite"/>
    </source>
</evidence>
<evidence type="ECO:0000305" key="3"/>
<proteinExistence type="inferred from homology"/>
<sequence length="79" mass="9244">MAKVCQVTGKRPQSGNNVSHANKKTNRRFLPNLKKRRFWLPDEKRFITLTVSTHGMRIIDKLGINAVLKKIREREKESK</sequence>
<keyword id="KW-0687">Ribonucleoprotein</keyword>
<keyword id="KW-0689">Ribosomal protein</keyword>
<organism>
    <name type="scientific">Coxiella burnetii (strain CbuK_Q154)</name>
    <name type="common">Coxiella burnetii (strain Q154)</name>
    <dbReference type="NCBI Taxonomy" id="434924"/>
    <lineage>
        <taxon>Bacteria</taxon>
        <taxon>Pseudomonadati</taxon>
        <taxon>Pseudomonadota</taxon>
        <taxon>Gammaproteobacteria</taxon>
        <taxon>Legionellales</taxon>
        <taxon>Coxiellaceae</taxon>
        <taxon>Coxiella</taxon>
    </lineage>
</organism>